<gene>
    <name type="primary">GXM3</name>
    <name type="ordered locus">At1g33800</name>
    <name type="ORF">F14M2.8</name>
</gene>
<name>GXM3_ARATH</name>
<reference key="1">
    <citation type="journal article" date="2012" name="Plant Cell Physiol.">
        <title>Three Arabidopsis DUF579 domain-containing GXM proteins are methyltransferases catalyzing 4-O-methylation of glucuronic acid on xylan.</title>
        <authorList>
            <person name="Lee C."/>
            <person name="Teng Q."/>
            <person name="Zhong R."/>
            <person name="Yuan Y."/>
            <person name="Haghighat M."/>
            <person name="Ye Z.H."/>
        </authorList>
    </citation>
    <scope>NUCLEOTIDE SEQUENCE [MRNA]</scope>
    <scope>FUNCTION</scope>
    <scope>CATALYTIC ACTIVITY</scope>
    <scope>TISSUE SPECIFICITY</scope>
    <scope>SUBCELLULAR LOCATION</scope>
    <scope>DISRUPTION PHENOTYPE</scope>
</reference>
<reference key="2">
    <citation type="journal article" date="2000" name="Nature">
        <title>Sequence and analysis of chromosome 1 of the plant Arabidopsis thaliana.</title>
        <authorList>
            <person name="Theologis A."/>
            <person name="Ecker J.R."/>
            <person name="Palm C.J."/>
            <person name="Federspiel N.A."/>
            <person name="Kaul S."/>
            <person name="White O."/>
            <person name="Alonso J."/>
            <person name="Altafi H."/>
            <person name="Araujo R."/>
            <person name="Bowman C.L."/>
            <person name="Brooks S.Y."/>
            <person name="Buehler E."/>
            <person name="Chan A."/>
            <person name="Chao Q."/>
            <person name="Chen H."/>
            <person name="Cheuk R.F."/>
            <person name="Chin C.W."/>
            <person name="Chung M.K."/>
            <person name="Conn L."/>
            <person name="Conway A.B."/>
            <person name="Conway A.R."/>
            <person name="Creasy T.H."/>
            <person name="Dewar K."/>
            <person name="Dunn P."/>
            <person name="Etgu P."/>
            <person name="Feldblyum T.V."/>
            <person name="Feng J.-D."/>
            <person name="Fong B."/>
            <person name="Fujii C.Y."/>
            <person name="Gill J.E."/>
            <person name="Goldsmith A.D."/>
            <person name="Haas B."/>
            <person name="Hansen N.F."/>
            <person name="Hughes B."/>
            <person name="Huizar L."/>
            <person name="Hunter J.L."/>
            <person name="Jenkins J."/>
            <person name="Johnson-Hopson C."/>
            <person name="Khan S."/>
            <person name="Khaykin E."/>
            <person name="Kim C.J."/>
            <person name="Koo H.L."/>
            <person name="Kremenetskaia I."/>
            <person name="Kurtz D.B."/>
            <person name="Kwan A."/>
            <person name="Lam B."/>
            <person name="Langin-Hooper S."/>
            <person name="Lee A."/>
            <person name="Lee J.M."/>
            <person name="Lenz C.A."/>
            <person name="Li J.H."/>
            <person name="Li Y.-P."/>
            <person name="Lin X."/>
            <person name="Liu S.X."/>
            <person name="Liu Z.A."/>
            <person name="Luros J.S."/>
            <person name="Maiti R."/>
            <person name="Marziali A."/>
            <person name="Militscher J."/>
            <person name="Miranda M."/>
            <person name="Nguyen M."/>
            <person name="Nierman W.C."/>
            <person name="Osborne B.I."/>
            <person name="Pai G."/>
            <person name="Peterson J."/>
            <person name="Pham P.K."/>
            <person name="Rizzo M."/>
            <person name="Rooney T."/>
            <person name="Rowley D."/>
            <person name="Sakano H."/>
            <person name="Salzberg S.L."/>
            <person name="Schwartz J.R."/>
            <person name="Shinn P."/>
            <person name="Southwick A.M."/>
            <person name="Sun H."/>
            <person name="Tallon L.J."/>
            <person name="Tambunga G."/>
            <person name="Toriumi M.J."/>
            <person name="Town C.D."/>
            <person name="Utterback T."/>
            <person name="Van Aken S."/>
            <person name="Vaysberg M."/>
            <person name="Vysotskaia V.S."/>
            <person name="Walker M."/>
            <person name="Wu D."/>
            <person name="Yu G."/>
            <person name="Fraser C.M."/>
            <person name="Venter J.C."/>
            <person name="Davis R.W."/>
        </authorList>
    </citation>
    <scope>NUCLEOTIDE SEQUENCE [LARGE SCALE GENOMIC DNA]</scope>
    <source>
        <strain>cv. Columbia</strain>
    </source>
</reference>
<reference key="3">
    <citation type="journal article" date="2017" name="Plant J.">
        <title>Araport11: a complete reannotation of the Arabidopsis thaliana reference genome.</title>
        <authorList>
            <person name="Cheng C.Y."/>
            <person name="Krishnakumar V."/>
            <person name="Chan A.P."/>
            <person name="Thibaud-Nissen F."/>
            <person name="Schobel S."/>
            <person name="Town C.D."/>
        </authorList>
    </citation>
    <scope>GENOME REANNOTATION</scope>
    <source>
        <strain>cv. Columbia</strain>
    </source>
</reference>
<reference key="4">
    <citation type="journal article" date="2003" name="Science">
        <title>Empirical analysis of transcriptional activity in the Arabidopsis genome.</title>
        <authorList>
            <person name="Yamada K."/>
            <person name="Lim J."/>
            <person name="Dale J.M."/>
            <person name="Chen H."/>
            <person name="Shinn P."/>
            <person name="Palm C.J."/>
            <person name="Southwick A.M."/>
            <person name="Wu H.C."/>
            <person name="Kim C.J."/>
            <person name="Nguyen M."/>
            <person name="Pham P.K."/>
            <person name="Cheuk R.F."/>
            <person name="Karlin-Newmann G."/>
            <person name="Liu S.X."/>
            <person name="Lam B."/>
            <person name="Sakano H."/>
            <person name="Wu T."/>
            <person name="Yu G."/>
            <person name="Miranda M."/>
            <person name="Quach H.L."/>
            <person name="Tripp M."/>
            <person name="Chang C.H."/>
            <person name="Lee J.M."/>
            <person name="Toriumi M.J."/>
            <person name="Chan M.M."/>
            <person name="Tang C.C."/>
            <person name="Onodera C.S."/>
            <person name="Deng J.M."/>
            <person name="Akiyama K."/>
            <person name="Ansari Y."/>
            <person name="Arakawa T."/>
            <person name="Banh J."/>
            <person name="Banno F."/>
            <person name="Bowser L."/>
            <person name="Brooks S.Y."/>
            <person name="Carninci P."/>
            <person name="Chao Q."/>
            <person name="Choy N."/>
            <person name="Enju A."/>
            <person name="Goldsmith A.D."/>
            <person name="Gurjal M."/>
            <person name="Hansen N.F."/>
            <person name="Hayashizaki Y."/>
            <person name="Johnson-Hopson C."/>
            <person name="Hsuan V.W."/>
            <person name="Iida K."/>
            <person name="Karnes M."/>
            <person name="Khan S."/>
            <person name="Koesema E."/>
            <person name="Ishida J."/>
            <person name="Jiang P.X."/>
            <person name="Jones T."/>
            <person name="Kawai J."/>
            <person name="Kamiya A."/>
            <person name="Meyers C."/>
            <person name="Nakajima M."/>
            <person name="Narusaka M."/>
            <person name="Seki M."/>
            <person name="Sakurai T."/>
            <person name="Satou M."/>
            <person name="Tamse R."/>
            <person name="Vaysberg M."/>
            <person name="Wallender E.K."/>
            <person name="Wong C."/>
            <person name="Yamamura Y."/>
            <person name="Yuan S."/>
            <person name="Shinozaki K."/>
            <person name="Davis R.W."/>
            <person name="Theologis A."/>
            <person name="Ecker J.R."/>
        </authorList>
    </citation>
    <scope>NUCLEOTIDE SEQUENCE [LARGE SCALE MRNA]</scope>
    <source>
        <strain>cv. Columbia</strain>
    </source>
</reference>
<reference key="5">
    <citation type="submission" date="2002-03" db="EMBL/GenBank/DDBJ databases">
        <title>Full-length cDNA from Arabidopsis thaliana.</title>
        <authorList>
            <person name="Brover V.V."/>
            <person name="Troukhan M.E."/>
            <person name="Alexandrov N.A."/>
            <person name="Lu Y.-P."/>
            <person name="Flavell R.B."/>
            <person name="Feldmann K.A."/>
        </authorList>
    </citation>
    <scope>NUCLEOTIDE SEQUENCE [LARGE SCALE MRNA]</scope>
</reference>
<reference key="6">
    <citation type="journal article" date="2011" name="Plant J.">
        <title>The DUF579 domain containing proteins IRX15 and IRX15-L affect xylan synthesis in Arabidopsis.</title>
        <authorList>
            <person name="Jensen J.K."/>
            <person name="Kim H."/>
            <person name="Cocuron J.C."/>
            <person name="Orler R."/>
            <person name="Ralph J."/>
            <person name="Wilkerson C.G."/>
        </authorList>
    </citation>
    <scope>TISSUE SPECIFICITY</scope>
</reference>
<reference key="7">
    <citation type="journal article" date="2011" name="Plant J.">
        <title>Arabidopsis genes IRREGULAR XYLEM (IRX15) and IRX15L encode DUF579-containing proteins that are essential for normal xylan deposition in the secondary cell wall.</title>
        <authorList>
            <person name="Brown D."/>
            <person name="Wightman R."/>
            <person name="Zhang Z."/>
            <person name="Gomez L.D."/>
            <person name="Atanassov I."/>
            <person name="Bukowski J.P."/>
            <person name="Tryfona T."/>
            <person name="McQueen-Mason S.J."/>
            <person name="Dupree P."/>
            <person name="Turner S."/>
        </authorList>
    </citation>
    <scope>DISRUPTION PHENOTYPE</scope>
    <scope>DEVELOPMENTAL STAGE</scope>
</reference>
<organism>
    <name type="scientific">Arabidopsis thaliana</name>
    <name type="common">Mouse-ear cress</name>
    <dbReference type="NCBI Taxonomy" id="3702"/>
    <lineage>
        <taxon>Eukaryota</taxon>
        <taxon>Viridiplantae</taxon>
        <taxon>Streptophyta</taxon>
        <taxon>Embryophyta</taxon>
        <taxon>Tracheophyta</taxon>
        <taxon>Spermatophyta</taxon>
        <taxon>Magnoliopsida</taxon>
        <taxon>eudicotyledons</taxon>
        <taxon>Gunneridae</taxon>
        <taxon>Pentapetalae</taxon>
        <taxon>rosids</taxon>
        <taxon>malvids</taxon>
        <taxon>Brassicales</taxon>
        <taxon>Brassicaceae</taxon>
        <taxon>Camelineae</taxon>
        <taxon>Arabidopsis</taxon>
    </lineage>
</organism>
<protein>
    <recommendedName>
        <fullName>Glucuronoxylan 4-O-methyltransferase 3</fullName>
        <ecNumber>2.1.1.112</ecNumber>
    </recommendedName>
</protein>
<proteinExistence type="evidence at protein level"/>
<evidence type="ECO:0000255" key="1"/>
<evidence type="ECO:0000256" key="2">
    <source>
        <dbReference type="SAM" id="MobiDB-lite"/>
    </source>
</evidence>
<evidence type="ECO:0000269" key="3">
    <source>
    </source>
</evidence>
<evidence type="ECO:0000269" key="4">
    <source>
    </source>
</evidence>
<evidence type="ECO:0000269" key="5">
    <source>
    </source>
</evidence>
<evidence type="ECO:0000305" key="6"/>
<sequence>MRTKSPSSLNLKVIFIGSSILILIIIYLARSNISSSSSKPISKTNLSQEEEETQHKQEGCPTTQQCTKMPLSLSDALVHYVTSNVTPQQTFDEVSVSKRVLDKKSPCNFLVFGLGHDSLMWASLNHGGRTLFIEEDQAWIAIVTKKFPNLESYHVVYDTKVKDSDKLMELGRSEECRSVSDPRNSKCDLALKDFPADFYETKWDLIMVDAPTGYHEEAPGRMSAIYTAGLLARNREDGETDVFVHDVNRPVEDEFSATFLCKGYMREQNGRLRHFTIPSHRARAGRPFCPVEVDRRR</sequence>
<dbReference type="EC" id="2.1.1.112"/>
<dbReference type="EMBL" id="JX914596">
    <property type="protein sequence ID" value="AFU91594.1"/>
    <property type="molecule type" value="mRNA"/>
</dbReference>
<dbReference type="EMBL" id="AC010164">
    <property type="protein sequence ID" value="AAF97282.1"/>
    <property type="molecule type" value="Genomic_DNA"/>
</dbReference>
<dbReference type="EMBL" id="CP002684">
    <property type="protein sequence ID" value="AEE31626.1"/>
    <property type="molecule type" value="Genomic_DNA"/>
</dbReference>
<dbReference type="EMBL" id="AY070772">
    <property type="protein sequence ID" value="AAL50109.1"/>
    <property type="molecule type" value="mRNA"/>
</dbReference>
<dbReference type="EMBL" id="AY097395">
    <property type="protein sequence ID" value="AAM19911.1"/>
    <property type="molecule type" value="mRNA"/>
</dbReference>
<dbReference type="EMBL" id="AY084664">
    <property type="protein sequence ID" value="AAM61226.1"/>
    <property type="molecule type" value="mRNA"/>
</dbReference>
<dbReference type="PIR" id="E86461">
    <property type="entry name" value="E86461"/>
</dbReference>
<dbReference type="RefSeq" id="NP_564428.1">
    <property type="nucleotide sequence ID" value="NM_103099.2"/>
</dbReference>
<dbReference type="BioGRID" id="25504">
    <property type="interactions" value="4"/>
</dbReference>
<dbReference type="FunCoup" id="Q9LQ32">
    <property type="interactions" value="84"/>
</dbReference>
<dbReference type="IntAct" id="Q9LQ32">
    <property type="interactions" value="5"/>
</dbReference>
<dbReference type="STRING" id="3702.Q9LQ32"/>
<dbReference type="iPTMnet" id="Q9LQ32"/>
<dbReference type="PaxDb" id="3702-AT1G33800.1"/>
<dbReference type="ProteomicsDB" id="247278"/>
<dbReference type="EnsemblPlants" id="AT1G33800.1">
    <property type="protein sequence ID" value="AT1G33800.1"/>
    <property type="gene ID" value="AT1G33800"/>
</dbReference>
<dbReference type="GeneID" id="840272"/>
<dbReference type="Gramene" id="AT1G33800.1">
    <property type="protein sequence ID" value="AT1G33800.1"/>
    <property type="gene ID" value="AT1G33800"/>
</dbReference>
<dbReference type="KEGG" id="ath:AT1G33800"/>
<dbReference type="Araport" id="AT1G33800"/>
<dbReference type="TAIR" id="AT1G33800">
    <property type="gene designation" value="GXMT1"/>
</dbReference>
<dbReference type="eggNOG" id="ENOG502QST5">
    <property type="taxonomic scope" value="Eukaryota"/>
</dbReference>
<dbReference type="HOGENOM" id="CLU_053427_0_0_1"/>
<dbReference type="InParanoid" id="Q9LQ32"/>
<dbReference type="OMA" id="WIAIVTK"/>
<dbReference type="OrthoDB" id="1896682at2759"/>
<dbReference type="PhylomeDB" id="Q9LQ32"/>
<dbReference type="PRO" id="PR:Q9LQ32"/>
<dbReference type="Proteomes" id="UP000006548">
    <property type="component" value="Chromosome 1"/>
</dbReference>
<dbReference type="ExpressionAtlas" id="Q9LQ32">
    <property type="expression patterns" value="baseline and differential"/>
</dbReference>
<dbReference type="GO" id="GO:0005794">
    <property type="term" value="C:Golgi apparatus"/>
    <property type="evidence" value="ECO:0000314"/>
    <property type="project" value="TAIR"/>
</dbReference>
<dbReference type="GO" id="GO:0000139">
    <property type="term" value="C:Golgi membrane"/>
    <property type="evidence" value="ECO:0007669"/>
    <property type="project" value="UniProtKB-SubCell"/>
</dbReference>
<dbReference type="GO" id="GO:0030775">
    <property type="term" value="F:glucuronoxylan 4-O-methyltransferase activity"/>
    <property type="evidence" value="ECO:0000314"/>
    <property type="project" value="TAIR"/>
</dbReference>
<dbReference type="GO" id="GO:0009808">
    <property type="term" value="P:lignin metabolic process"/>
    <property type="evidence" value="ECO:0000315"/>
    <property type="project" value="TAIR"/>
</dbReference>
<dbReference type="GO" id="GO:0032259">
    <property type="term" value="P:methylation"/>
    <property type="evidence" value="ECO:0007669"/>
    <property type="project" value="UniProtKB-KW"/>
</dbReference>
<dbReference type="GO" id="GO:0005976">
    <property type="term" value="P:polysaccharide metabolic process"/>
    <property type="evidence" value="ECO:0000314"/>
    <property type="project" value="TAIR"/>
</dbReference>
<dbReference type="GO" id="GO:0045492">
    <property type="term" value="P:xylan biosynthetic process"/>
    <property type="evidence" value="ECO:0007669"/>
    <property type="project" value="InterPro"/>
</dbReference>
<dbReference type="GO" id="GO:0045491">
    <property type="term" value="P:xylan metabolic process"/>
    <property type="evidence" value="ECO:0000315"/>
    <property type="project" value="TAIR"/>
</dbReference>
<dbReference type="Gene3D" id="3.40.50.150">
    <property type="entry name" value="Vaccinia Virus protein VP39"/>
    <property type="match status" value="1"/>
</dbReference>
<dbReference type="InterPro" id="IPR006514">
    <property type="entry name" value="IRX15/GXM/AGM"/>
</dbReference>
<dbReference type="InterPro" id="IPR029063">
    <property type="entry name" value="SAM-dependent_MTases_sf"/>
</dbReference>
<dbReference type="NCBIfam" id="TIGR01627">
    <property type="entry name" value="A_thal_3515"/>
    <property type="match status" value="1"/>
</dbReference>
<dbReference type="PANTHER" id="PTHR31444">
    <property type="entry name" value="OS11G0490100 PROTEIN"/>
    <property type="match status" value="1"/>
</dbReference>
<dbReference type="Pfam" id="PF21729">
    <property type="entry name" value="IRX15_IRX15L_GXM"/>
    <property type="match status" value="1"/>
</dbReference>
<feature type="chain" id="PRO_0000420835" description="Glucuronoxylan 4-O-methyltransferase 3">
    <location>
        <begin position="1"/>
        <end position="297"/>
    </location>
</feature>
<feature type="transmembrane region" description="Helical" evidence="1">
    <location>
        <begin position="9"/>
        <end position="29"/>
    </location>
</feature>
<feature type="region of interest" description="Disordered" evidence="2">
    <location>
        <begin position="35"/>
        <end position="63"/>
    </location>
</feature>
<feature type="compositionally biased region" description="Low complexity" evidence="2">
    <location>
        <begin position="35"/>
        <end position="47"/>
    </location>
</feature>
<comment type="function">
    <text evidence="5">Methyltransferase catalyzing 4-O-methylation of glucuronic acid side chains on xylan.</text>
</comment>
<comment type="catalytic activity">
    <reaction evidence="5">
        <text>glucuronoxylan D-glucuronate + n S-adenosyl-L-methionine = glucuronoxylan 4-O-methyl-D-glucuronate + n S-adenosyl-L-homocysteine + n H(+)</text>
        <dbReference type="Rhea" id="RHEA:20413"/>
        <dbReference type="Rhea" id="RHEA-COMP:14499"/>
        <dbReference type="Rhea" id="RHEA-COMP:14500"/>
        <dbReference type="ChEBI" id="CHEBI:15378"/>
        <dbReference type="ChEBI" id="CHEBI:57856"/>
        <dbReference type="ChEBI" id="CHEBI:59789"/>
        <dbReference type="ChEBI" id="CHEBI:140335"/>
        <dbReference type="ChEBI" id="CHEBI:140336"/>
        <dbReference type="EC" id="2.1.1.112"/>
    </reaction>
</comment>
<comment type="subcellular location">
    <subcellularLocation>
        <location evidence="5">Golgi apparatus membrane</location>
        <topology evidence="5">Single-pass membrane protein</topology>
    </subcellularLocation>
</comment>
<comment type="tissue specificity">
    <text evidence="4 5">Expressed in hypocotyls, roots, rosette leaves, stems and siliques.</text>
</comment>
<comment type="developmental stage">
    <text evidence="3">Up-regulated during secondary cell wall deposition.</text>
</comment>
<comment type="disruption phenotype">
    <text evidence="3 5">No visible phenotype; due to the redundancy with GXM1 and GXM2. Reduced levels of methylated glucuronic acids. Gxm2 and gxm3 double mutants show reduced stem mechanical strength.</text>
</comment>
<comment type="similarity">
    <text evidence="6">Belongs to the methyltransferase superfamily.</text>
</comment>
<keyword id="KW-0333">Golgi apparatus</keyword>
<keyword id="KW-0472">Membrane</keyword>
<keyword id="KW-0489">Methyltransferase</keyword>
<keyword id="KW-1185">Reference proteome</keyword>
<keyword id="KW-0949">S-adenosyl-L-methionine</keyword>
<keyword id="KW-0808">Transferase</keyword>
<keyword id="KW-0812">Transmembrane</keyword>
<keyword id="KW-1133">Transmembrane helix</keyword>
<accession>Q9LQ32</accession>